<reference key="1">
    <citation type="journal article" date="2002" name="Nature">
        <title>The genome sequence of Schizosaccharomyces pombe.</title>
        <authorList>
            <person name="Wood V."/>
            <person name="Gwilliam R."/>
            <person name="Rajandream M.A."/>
            <person name="Lyne M.H."/>
            <person name="Lyne R."/>
            <person name="Stewart A."/>
            <person name="Sgouros J.G."/>
            <person name="Peat N."/>
            <person name="Hayles J."/>
            <person name="Baker S.G."/>
            <person name="Basham D."/>
            <person name="Bowman S."/>
            <person name="Brooks K."/>
            <person name="Brown D."/>
            <person name="Brown S."/>
            <person name="Chillingworth T."/>
            <person name="Churcher C.M."/>
            <person name="Collins M."/>
            <person name="Connor R."/>
            <person name="Cronin A."/>
            <person name="Davis P."/>
            <person name="Feltwell T."/>
            <person name="Fraser A."/>
            <person name="Gentles S."/>
            <person name="Goble A."/>
            <person name="Hamlin N."/>
            <person name="Harris D.E."/>
            <person name="Hidalgo J."/>
            <person name="Hodgson G."/>
            <person name="Holroyd S."/>
            <person name="Hornsby T."/>
            <person name="Howarth S."/>
            <person name="Huckle E.J."/>
            <person name="Hunt S."/>
            <person name="Jagels K."/>
            <person name="James K.D."/>
            <person name="Jones L."/>
            <person name="Jones M."/>
            <person name="Leather S."/>
            <person name="McDonald S."/>
            <person name="McLean J."/>
            <person name="Mooney P."/>
            <person name="Moule S."/>
            <person name="Mungall K.L."/>
            <person name="Murphy L.D."/>
            <person name="Niblett D."/>
            <person name="Odell C."/>
            <person name="Oliver K."/>
            <person name="O'Neil S."/>
            <person name="Pearson D."/>
            <person name="Quail M.A."/>
            <person name="Rabbinowitsch E."/>
            <person name="Rutherford K.M."/>
            <person name="Rutter S."/>
            <person name="Saunders D."/>
            <person name="Seeger K."/>
            <person name="Sharp S."/>
            <person name="Skelton J."/>
            <person name="Simmonds M.N."/>
            <person name="Squares R."/>
            <person name="Squares S."/>
            <person name="Stevens K."/>
            <person name="Taylor K."/>
            <person name="Taylor R.G."/>
            <person name="Tivey A."/>
            <person name="Walsh S.V."/>
            <person name="Warren T."/>
            <person name="Whitehead S."/>
            <person name="Woodward J.R."/>
            <person name="Volckaert G."/>
            <person name="Aert R."/>
            <person name="Robben J."/>
            <person name="Grymonprez B."/>
            <person name="Weltjens I."/>
            <person name="Vanstreels E."/>
            <person name="Rieger M."/>
            <person name="Schaefer M."/>
            <person name="Mueller-Auer S."/>
            <person name="Gabel C."/>
            <person name="Fuchs M."/>
            <person name="Duesterhoeft A."/>
            <person name="Fritzc C."/>
            <person name="Holzer E."/>
            <person name="Moestl D."/>
            <person name="Hilbert H."/>
            <person name="Borzym K."/>
            <person name="Langer I."/>
            <person name="Beck A."/>
            <person name="Lehrach H."/>
            <person name="Reinhardt R."/>
            <person name="Pohl T.M."/>
            <person name="Eger P."/>
            <person name="Zimmermann W."/>
            <person name="Wedler H."/>
            <person name="Wambutt R."/>
            <person name="Purnelle B."/>
            <person name="Goffeau A."/>
            <person name="Cadieu E."/>
            <person name="Dreano S."/>
            <person name="Gloux S."/>
            <person name="Lelaure V."/>
            <person name="Mottier S."/>
            <person name="Galibert F."/>
            <person name="Aves S.J."/>
            <person name="Xiang Z."/>
            <person name="Hunt C."/>
            <person name="Moore K."/>
            <person name="Hurst S.M."/>
            <person name="Lucas M."/>
            <person name="Rochet M."/>
            <person name="Gaillardin C."/>
            <person name="Tallada V.A."/>
            <person name="Garzon A."/>
            <person name="Thode G."/>
            <person name="Daga R.R."/>
            <person name="Cruzado L."/>
            <person name="Jimenez J."/>
            <person name="Sanchez M."/>
            <person name="del Rey F."/>
            <person name="Benito J."/>
            <person name="Dominguez A."/>
            <person name="Revuelta J.L."/>
            <person name="Moreno S."/>
            <person name="Armstrong J."/>
            <person name="Forsburg S.L."/>
            <person name="Cerutti L."/>
            <person name="Lowe T."/>
            <person name="McCombie W.R."/>
            <person name="Paulsen I."/>
            <person name="Potashkin J."/>
            <person name="Shpakovski G.V."/>
            <person name="Ussery D."/>
            <person name="Barrell B.G."/>
            <person name="Nurse P."/>
        </authorList>
    </citation>
    <scope>NUCLEOTIDE SEQUENCE [LARGE SCALE GENOMIC DNA]</scope>
    <source>
        <strain>972 / ATCC 24843</strain>
    </source>
</reference>
<keyword id="KW-0413">Isomerase</keyword>
<keyword id="KW-0663">Pyridoxal phosphate</keyword>
<keyword id="KW-1185">Reference proteome</keyword>
<sequence length="370" mass="41148">MRGARAVIDLRAIGYNYNLIRELLDEKNPDAHILCILKANAYGHGAVEVAQFLAKYCSAEGFGVASIEEALELRLSGIQNRILLLEGFFTDEDELSLIDKYNFSITIHCEEQLKSFMNYPFKKPVEVHLKLDSGMNRLGFTPAEYADKYRLLKNHKNVSGIVKATHFAFADIPEKSEYTLKQWRIFEKAAGCLPDPLSAGGGVIVVGWLNTIHMDWLRTGSMLYGLDPYDLDAKAPELPKPLIPAMKLMSTIVCVKHVEKDQPIGYGGAYVTTRDSLIGVVAIGYGDGFPQVRNGCPVIINGKRVPTVGKVCMDMLAIDVTDVPDVKRGDDVVLWGNPELTIEEVSTFSNENPFEIITGLTRRVPLQYTF</sequence>
<gene>
    <name type="primary">alr2</name>
    <name type="ORF">SPBC359.02</name>
</gene>
<proteinExistence type="inferred from homology"/>
<comment type="catalytic activity">
    <reaction>
        <text>L-alanine = D-alanine</text>
        <dbReference type="Rhea" id="RHEA:20249"/>
        <dbReference type="ChEBI" id="CHEBI:57416"/>
        <dbReference type="ChEBI" id="CHEBI:57972"/>
        <dbReference type="EC" id="5.1.1.1"/>
    </reaction>
</comment>
<comment type="cofactor">
    <cofactor evidence="1">
        <name>pyridoxal 5'-phosphate</name>
        <dbReference type="ChEBI" id="CHEBI:597326"/>
    </cofactor>
</comment>
<comment type="similarity">
    <text evidence="2">Belongs to the alanine racemase family.</text>
</comment>
<organism>
    <name type="scientific">Schizosaccharomyces pombe (strain 972 / ATCC 24843)</name>
    <name type="common">Fission yeast</name>
    <dbReference type="NCBI Taxonomy" id="284812"/>
    <lineage>
        <taxon>Eukaryota</taxon>
        <taxon>Fungi</taxon>
        <taxon>Dikarya</taxon>
        <taxon>Ascomycota</taxon>
        <taxon>Taphrinomycotina</taxon>
        <taxon>Schizosaccharomycetes</taxon>
        <taxon>Schizosaccharomycetales</taxon>
        <taxon>Schizosaccharomycetaceae</taxon>
        <taxon>Schizosaccharomyces</taxon>
    </lineage>
</organism>
<evidence type="ECO:0000250" key="1"/>
<evidence type="ECO:0000305" key="2"/>
<accession>Q9P5N3</accession>
<dbReference type="EC" id="5.1.1.1"/>
<dbReference type="EMBL" id="CU329671">
    <property type="protein sequence ID" value="CAB91571.1"/>
    <property type="molecule type" value="Genomic_DNA"/>
</dbReference>
<dbReference type="RefSeq" id="NP_595052.1">
    <property type="nucleotide sequence ID" value="NM_001020958.2"/>
</dbReference>
<dbReference type="SMR" id="Q9P5N3"/>
<dbReference type="FunCoup" id="Q9P5N3">
    <property type="interactions" value="418"/>
</dbReference>
<dbReference type="STRING" id="284812.Q9P5N3"/>
<dbReference type="PaxDb" id="4896-SPBC359.02.1"/>
<dbReference type="EnsemblFungi" id="SPBC359.02.1">
    <property type="protein sequence ID" value="SPBC359.02.1:pep"/>
    <property type="gene ID" value="SPBC359.02"/>
</dbReference>
<dbReference type="GeneID" id="2540953"/>
<dbReference type="KEGG" id="spo:2540953"/>
<dbReference type="PomBase" id="SPBC359.02">
    <property type="gene designation" value="alr2"/>
</dbReference>
<dbReference type="VEuPathDB" id="FungiDB:SPBC359.02"/>
<dbReference type="eggNOG" id="ENOG502S6C6">
    <property type="taxonomic scope" value="Eukaryota"/>
</dbReference>
<dbReference type="HOGENOM" id="CLU_028393_1_0_1"/>
<dbReference type="InParanoid" id="Q9P5N3"/>
<dbReference type="PhylomeDB" id="Q9P5N3"/>
<dbReference type="PRO" id="PR:Q9P5N3"/>
<dbReference type="Proteomes" id="UP000002485">
    <property type="component" value="Chromosome II"/>
</dbReference>
<dbReference type="GO" id="GO:0005829">
    <property type="term" value="C:cytosol"/>
    <property type="evidence" value="ECO:0000318"/>
    <property type="project" value="GO_Central"/>
</dbReference>
<dbReference type="GO" id="GO:0008784">
    <property type="term" value="F:alanine racemase activity"/>
    <property type="evidence" value="ECO:0000318"/>
    <property type="project" value="GO_Central"/>
</dbReference>
<dbReference type="GO" id="GO:0030170">
    <property type="term" value="F:pyridoxal phosphate binding"/>
    <property type="evidence" value="ECO:0000318"/>
    <property type="project" value="GO_Central"/>
</dbReference>
<dbReference type="GO" id="GO:0006522">
    <property type="term" value="P:alanine metabolic process"/>
    <property type="evidence" value="ECO:0000250"/>
    <property type="project" value="PomBase"/>
</dbReference>
<dbReference type="CDD" id="cd06827">
    <property type="entry name" value="PLPDE_III_AR_proteobact"/>
    <property type="match status" value="1"/>
</dbReference>
<dbReference type="FunFam" id="3.20.20.10:FF:000002">
    <property type="entry name" value="Alanine racemase"/>
    <property type="match status" value="1"/>
</dbReference>
<dbReference type="Gene3D" id="3.20.20.10">
    <property type="entry name" value="Alanine racemase"/>
    <property type="match status" value="1"/>
</dbReference>
<dbReference type="Gene3D" id="2.40.37.10">
    <property type="entry name" value="Lyase, Ornithine Decarboxylase, Chain A, domain 1"/>
    <property type="match status" value="1"/>
</dbReference>
<dbReference type="HAMAP" id="MF_01201">
    <property type="entry name" value="Ala_racemase"/>
    <property type="match status" value="1"/>
</dbReference>
<dbReference type="InterPro" id="IPR000821">
    <property type="entry name" value="Ala_racemase"/>
</dbReference>
<dbReference type="InterPro" id="IPR009006">
    <property type="entry name" value="Ala_racemase/Decarboxylase_C"/>
</dbReference>
<dbReference type="InterPro" id="IPR011079">
    <property type="entry name" value="Ala_racemase_C"/>
</dbReference>
<dbReference type="InterPro" id="IPR001608">
    <property type="entry name" value="Ala_racemase_N"/>
</dbReference>
<dbReference type="InterPro" id="IPR020622">
    <property type="entry name" value="Ala_racemase_pyridoxalP-BS"/>
</dbReference>
<dbReference type="InterPro" id="IPR029066">
    <property type="entry name" value="PLP-binding_barrel"/>
</dbReference>
<dbReference type="NCBIfam" id="TIGR00492">
    <property type="entry name" value="alr"/>
    <property type="match status" value="1"/>
</dbReference>
<dbReference type="PANTHER" id="PTHR30511">
    <property type="entry name" value="ALANINE RACEMASE"/>
    <property type="match status" value="1"/>
</dbReference>
<dbReference type="PANTHER" id="PTHR30511:SF0">
    <property type="entry name" value="ALANINE RACEMASE, CATABOLIC-RELATED"/>
    <property type="match status" value="1"/>
</dbReference>
<dbReference type="Pfam" id="PF00842">
    <property type="entry name" value="Ala_racemase_C"/>
    <property type="match status" value="1"/>
</dbReference>
<dbReference type="Pfam" id="PF01168">
    <property type="entry name" value="Ala_racemase_N"/>
    <property type="match status" value="1"/>
</dbReference>
<dbReference type="PRINTS" id="PR00992">
    <property type="entry name" value="ALARACEMASE"/>
</dbReference>
<dbReference type="SMART" id="SM01005">
    <property type="entry name" value="Ala_racemase_C"/>
    <property type="match status" value="1"/>
</dbReference>
<dbReference type="SUPFAM" id="SSF50621">
    <property type="entry name" value="Alanine racemase C-terminal domain-like"/>
    <property type="match status" value="1"/>
</dbReference>
<dbReference type="SUPFAM" id="SSF51419">
    <property type="entry name" value="PLP-binding barrel"/>
    <property type="match status" value="1"/>
</dbReference>
<dbReference type="PROSITE" id="PS00395">
    <property type="entry name" value="ALANINE_RACEMASE"/>
    <property type="match status" value="1"/>
</dbReference>
<protein>
    <recommendedName>
        <fullName>Putative alanine racemase 2</fullName>
        <ecNumber>5.1.1.1</ecNumber>
    </recommendedName>
</protein>
<feature type="chain" id="PRO_0000114605" description="Putative alanine racemase 2">
    <location>
        <begin position="1"/>
        <end position="370"/>
    </location>
</feature>
<feature type="active site" description="Proton acceptor; specific for D-alanine" evidence="1">
    <location>
        <position position="38"/>
    </location>
</feature>
<feature type="active site" description="Proton acceptor; specific for L-alanine" evidence="1">
    <location>
        <position position="266"/>
    </location>
</feature>
<feature type="modified residue" description="N6-(pyridoxal phosphate)lysine" evidence="1">
    <location>
        <position position="38"/>
    </location>
</feature>
<name>ALR2_SCHPO</name>